<organism>
    <name type="scientific">Drosophila mojavensis</name>
    <name type="common">Fruit fly</name>
    <dbReference type="NCBI Taxonomy" id="7230"/>
    <lineage>
        <taxon>Eukaryota</taxon>
        <taxon>Metazoa</taxon>
        <taxon>Ecdysozoa</taxon>
        <taxon>Arthropoda</taxon>
        <taxon>Hexapoda</taxon>
        <taxon>Insecta</taxon>
        <taxon>Pterygota</taxon>
        <taxon>Neoptera</taxon>
        <taxon>Endopterygota</taxon>
        <taxon>Diptera</taxon>
        <taxon>Brachycera</taxon>
        <taxon>Muscomorpha</taxon>
        <taxon>Ephydroidea</taxon>
        <taxon>Drosophilidae</taxon>
        <taxon>Drosophila</taxon>
    </lineage>
</organism>
<feature type="initiator methionine" description="Removed" evidence="1">
    <location>
        <position position="1"/>
    </location>
</feature>
<feature type="chain" id="PRO_0000389309" description="Small ribosomal subunit protein eS1">
    <location>
        <begin position="2"/>
        <end position="268"/>
    </location>
</feature>
<feature type="region of interest" description="Disordered" evidence="2">
    <location>
        <begin position="1"/>
        <end position="21"/>
    </location>
</feature>
<sequence>MAVGKNKGLSKGGKKGGKKKVVDPFSRKDWYDVKAPNMFQTRQIGKTLVNRTQGQRIASDYLKGRVFEVSLADLQKDIDPERSFRKFRLIAEDVQDRNVLCNFHGMDLTTDKYRSMVKKWQTLIEAIVEAKTVDGYLLRVFCIGFTFKDQQSQRKTCYAQQSQVRKIRARMTDIITNEVSGADLKQLVNKLALDSIAKDIEKSCQRIYPLHDVYIRKVKVLKKPRFDISKLLELHGDGGGKTTEAVVSAEGAVIDRPEGYEPPVQEAV</sequence>
<dbReference type="EMBL" id="CH933813">
    <property type="protein sequence ID" value="EDW10944.1"/>
    <property type="molecule type" value="Genomic_DNA"/>
</dbReference>
<dbReference type="SMR" id="B4L7F0"/>
<dbReference type="FunCoup" id="B4L7F0">
    <property type="interactions" value="893"/>
</dbReference>
<dbReference type="EnsemblMetazoa" id="FBtr0164838">
    <property type="protein sequence ID" value="FBpp0163330"/>
    <property type="gene ID" value="FBgn0136867"/>
</dbReference>
<dbReference type="EnsemblMetazoa" id="XM_002011418.4">
    <property type="protein sequence ID" value="XP_002011454.1"/>
    <property type="gene ID" value="LOC6585828"/>
</dbReference>
<dbReference type="GeneID" id="6585828"/>
<dbReference type="KEGG" id="dmo:Dmoj_GI14113"/>
<dbReference type="CTD" id="6189"/>
<dbReference type="eggNOG" id="KOG1628">
    <property type="taxonomic scope" value="Eukaryota"/>
</dbReference>
<dbReference type="HOGENOM" id="CLU_062507_0_1_1"/>
<dbReference type="InParanoid" id="B4L7F0"/>
<dbReference type="OMA" id="MCEIITR"/>
<dbReference type="OrthoDB" id="9834376at2759"/>
<dbReference type="PhylomeDB" id="B4L7F0"/>
<dbReference type="ChiTaRS" id="RpS3A">
    <property type="organism name" value="fly"/>
</dbReference>
<dbReference type="Proteomes" id="UP000009192">
    <property type="component" value="Unassembled WGS sequence"/>
</dbReference>
<dbReference type="GO" id="GO:0022627">
    <property type="term" value="C:cytosolic small ribosomal subunit"/>
    <property type="evidence" value="ECO:0007669"/>
    <property type="project" value="UniProtKB-UniRule"/>
</dbReference>
<dbReference type="GO" id="GO:0003735">
    <property type="term" value="F:structural constituent of ribosome"/>
    <property type="evidence" value="ECO:0007669"/>
    <property type="project" value="UniProtKB-UniRule"/>
</dbReference>
<dbReference type="GO" id="GO:0048477">
    <property type="term" value="P:oogenesis"/>
    <property type="evidence" value="ECO:0007669"/>
    <property type="project" value="UniProtKB-KW"/>
</dbReference>
<dbReference type="GO" id="GO:0006412">
    <property type="term" value="P:translation"/>
    <property type="evidence" value="ECO:0007669"/>
    <property type="project" value="UniProtKB-UniRule"/>
</dbReference>
<dbReference type="HAMAP" id="MF_03122">
    <property type="entry name" value="Ribosomal_eS1_euk"/>
    <property type="match status" value="1"/>
</dbReference>
<dbReference type="InterPro" id="IPR001593">
    <property type="entry name" value="Ribosomal_eS1"/>
</dbReference>
<dbReference type="InterPro" id="IPR018281">
    <property type="entry name" value="Ribosomal_eS1_CS"/>
</dbReference>
<dbReference type="InterPro" id="IPR027500">
    <property type="entry name" value="Ribosomal_eS1_euk"/>
</dbReference>
<dbReference type="PANTHER" id="PTHR11830">
    <property type="entry name" value="40S RIBOSOMAL PROTEIN S3A"/>
    <property type="match status" value="1"/>
</dbReference>
<dbReference type="Pfam" id="PF01015">
    <property type="entry name" value="Ribosomal_S3Ae"/>
    <property type="match status" value="1"/>
</dbReference>
<dbReference type="SMART" id="SM01397">
    <property type="entry name" value="Ribosomal_S3Ae"/>
    <property type="match status" value="1"/>
</dbReference>
<dbReference type="PROSITE" id="PS01191">
    <property type="entry name" value="RIBOSOMAL_S3AE"/>
    <property type="match status" value="1"/>
</dbReference>
<keyword id="KW-0963">Cytoplasm</keyword>
<keyword id="KW-0217">Developmental protein</keyword>
<keyword id="KW-0221">Differentiation</keyword>
<keyword id="KW-0896">Oogenesis</keyword>
<keyword id="KW-1185">Reference proteome</keyword>
<keyword id="KW-0687">Ribonucleoprotein</keyword>
<keyword id="KW-0689">Ribosomal protein</keyword>
<reference key="1">
    <citation type="journal article" date="2007" name="Nature">
        <title>Evolution of genes and genomes on the Drosophila phylogeny.</title>
        <authorList>
            <consortium name="Drosophila 12 genomes consortium"/>
        </authorList>
    </citation>
    <scope>NUCLEOTIDE SEQUENCE [LARGE SCALE GENOMIC DNA]</scope>
    <source>
        <strain>Tucson 15081-1352.22</strain>
    </source>
</reference>
<comment type="function">
    <text evidence="1">Essential for oogenesis; required for late follicle cell development.</text>
</comment>
<comment type="subunit">
    <text evidence="1">Component of the small ribosomal subunit. Mature ribosomes consist of a small (40S) and a large (60S) subunit. The 40S subunit contains about 33 different proteins and 1 molecule of RNA (18S). The 60S subunit contains about 49 different proteins and 3 molecules of RNA (28S, 5.8S and 5S).</text>
</comment>
<comment type="subcellular location">
    <subcellularLocation>
        <location evidence="1">Cytoplasm</location>
    </subcellularLocation>
</comment>
<comment type="similarity">
    <text evidence="1">Belongs to the eukaryotic ribosomal protein eS1 family.</text>
</comment>
<protein>
    <recommendedName>
        <fullName evidence="1">Small ribosomal subunit protein eS1</fullName>
    </recommendedName>
    <alternativeName>
        <fullName evidence="3">40S ribosomal protein S3a</fullName>
    </alternativeName>
</protein>
<name>RS3A_DROMO</name>
<proteinExistence type="inferred from homology"/>
<evidence type="ECO:0000255" key="1">
    <source>
        <dbReference type="HAMAP-Rule" id="MF_03122"/>
    </source>
</evidence>
<evidence type="ECO:0000256" key="2">
    <source>
        <dbReference type="SAM" id="MobiDB-lite"/>
    </source>
</evidence>
<evidence type="ECO:0000305" key="3"/>
<accession>B4L7F0</accession>
<gene>
    <name evidence="1" type="primary">RpS3A</name>
    <name type="ORF">GI14113</name>
</gene>